<organism>
    <name type="scientific">Dictyostelium discoideum</name>
    <name type="common">Social amoeba</name>
    <dbReference type="NCBI Taxonomy" id="44689"/>
    <lineage>
        <taxon>Eukaryota</taxon>
        <taxon>Amoebozoa</taxon>
        <taxon>Evosea</taxon>
        <taxon>Eumycetozoa</taxon>
        <taxon>Dictyostelia</taxon>
        <taxon>Dictyosteliales</taxon>
        <taxon>Dictyosteliaceae</taxon>
        <taxon>Dictyostelium</taxon>
    </lineage>
</organism>
<accession>Q54J71</accession>
<reference key="1">
    <citation type="journal article" date="2005" name="Nature">
        <title>The genome of the social amoeba Dictyostelium discoideum.</title>
        <authorList>
            <person name="Eichinger L."/>
            <person name="Pachebat J.A."/>
            <person name="Gloeckner G."/>
            <person name="Rajandream M.A."/>
            <person name="Sucgang R."/>
            <person name="Berriman M."/>
            <person name="Song J."/>
            <person name="Olsen R."/>
            <person name="Szafranski K."/>
            <person name="Xu Q."/>
            <person name="Tunggal B."/>
            <person name="Kummerfeld S."/>
            <person name="Madera M."/>
            <person name="Konfortov B.A."/>
            <person name="Rivero F."/>
            <person name="Bankier A.T."/>
            <person name="Lehmann R."/>
            <person name="Hamlin N."/>
            <person name="Davies R."/>
            <person name="Gaudet P."/>
            <person name="Fey P."/>
            <person name="Pilcher K."/>
            <person name="Chen G."/>
            <person name="Saunders D."/>
            <person name="Sodergren E.J."/>
            <person name="Davis P."/>
            <person name="Kerhornou A."/>
            <person name="Nie X."/>
            <person name="Hall N."/>
            <person name="Anjard C."/>
            <person name="Hemphill L."/>
            <person name="Bason N."/>
            <person name="Farbrother P."/>
            <person name="Desany B."/>
            <person name="Just E."/>
            <person name="Morio T."/>
            <person name="Rost R."/>
            <person name="Churcher C.M."/>
            <person name="Cooper J."/>
            <person name="Haydock S."/>
            <person name="van Driessche N."/>
            <person name="Cronin A."/>
            <person name="Goodhead I."/>
            <person name="Muzny D.M."/>
            <person name="Mourier T."/>
            <person name="Pain A."/>
            <person name="Lu M."/>
            <person name="Harper D."/>
            <person name="Lindsay R."/>
            <person name="Hauser H."/>
            <person name="James K.D."/>
            <person name="Quiles M."/>
            <person name="Madan Babu M."/>
            <person name="Saito T."/>
            <person name="Buchrieser C."/>
            <person name="Wardroper A."/>
            <person name="Felder M."/>
            <person name="Thangavelu M."/>
            <person name="Johnson D."/>
            <person name="Knights A."/>
            <person name="Loulseged H."/>
            <person name="Mungall K.L."/>
            <person name="Oliver K."/>
            <person name="Price C."/>
            <person name="Quail M.A."/>
            <person name="Urushihara H."/>
            <person name="Hernandez J."/>
            <person name="Rabbinowitsch E."/>
            <person name="Steffen D."/>
            <person name="Sanders M."/>
            <person name="Ma J."/>
            <person name="Kohara Y."/>
            <person name="Sharp S."/>
            <person name="Simmonds M.N."/>
            <person name="Spiegler S."/>
            <person name="Tivey A."/>
            <person name="Sugano S."/>
            <person name="White B."/>
            <person name="Walker D."/>
            <person name="Woodward J.R."/>
            <person name="Winckler T."/>
            <person name="Tanaka Y."/>
            <person name="Shaulsky G."/>
            <person name="Schleicher M."/>
            <person name="Weinstock G.M."/>
            <person name="Rosenthal A."/>
            <person name="Cox E.C."/>
            <person name="Chisholm R.L."/>
            <person name="Gibbs R.A."/>
            <person name="Loomis W.F."/>
            <person name="Platzer M."/>
            <person name="Kay R.R."/>
            <person name="Williams J.G."/>
            <person name="Dear P.H."/>
            <person name="Noegel A.A."/>
            <person name="Barrell B.G."/>
            <person name="Kuspa A."/>
        </authorList>
    </citation>
    <scope>NUCLEOTIDE SEQUENCE [LARGE SCALE GENOMIC DNA]</scope>
    <source>
        <strain>AX4</strain>
    </source>
</reference>
<reference key="2">
    <citation type="journal article" date="2006" name="Eur. J. Cell Biol.">
        <title>The Dictyostelium repertoire of seven transmembrane domain receptors.</title>
        <authorList>
            <person name="Prabhu Y."/>
            <person name="Eichinger L."/>
        </authorList>
    </citation>
    <scope>NOMENCLATURE</scope>
</reference>
<gene>
    <name type="primary">fslG</name>
    <name type="ORF">DDB_G0288261</name>
</gene>
<evidence type="ECO:0000250" key="1"/>
<evidence type="ECO:0000255" key="2"/>
<evidence type="ECO:0000256" key="3">
    <source>
        <dbReference type="SAM" id="MobiDB-lite"/>
    </source>
</evidence>
<evidence type="ECO:0000305" key="4"/>
<sequence length="574" mass="64284">MKSIIFITFFIFFLKKLNGLPNGYGVGLVDPNGQCMNYIGDSIDQPLCKNKLSNNGEFIYSTIGNSLNSQTLSQQTIAKSFEALTFIQNQCQDLLFAEYGICNIYLSPCIITTVAPLKNISLPQRLCNSACQRMVTNCPRLGEKIDCSISFLFPEVGTLYNLSDYGYKANGGLYEVPCFNPTADYDNSSSLNEFIEICPSPLLLKNSSDPKYSKRGYTYLPPTNCVLPCPVPNYTKEKWNQIENLSKVLSTISFVCSIYNILSFGILKKKKTKYTICISALSASVALINLGDIIKIGVGYEKVLCPEPGRFATQVDDPLCGLTAALFHVGICSTVLWTTTMAIYLYSAIKNIKLFKFRYFIIFNTGFSLTSLIIAASASKFEAGTGSIECWIRDRWYSICLFWLPCGICLLIGTICIASVIVEIYKVSKNIKLSESETIMRQIKPIISVILVSGSFTYLFIIFFDIERNFGGYRSAVTDYVLCLLNSTDNGIECHTSGPSYNPYFMFYFFMRFFGILFFLIYGTSKNARDSWYELFIKIKVSLSETSSTISNNSGGGSSQQKQQQQNEIKLEKI</sequence>
<name>FSLG_DICDI</name>
<comment type="subcellular location">
    <subcellularLocation>
        <location evidence="4">Membrane</location>
        <topology evidence="4">Multi-pass membrane protein</topology>
    </subcellularLocation>
</comment>
<comment type="similarity">
    <text evidence="4">Belongs to the G-protein coupled receptor Fz/Smo family.</text>
</comment>
<keyword id="KW-1015">Disulfide bond</keyword>
<keyword id="KW-0325">Glycoprotein</keyword>
<keyword id="KW-0472">Membrane</keyword>
<keyword id="KW-0675">Receptor</keyword>
<keyword id="KW-1185">Reference proteome</keyword>
<keyword id="KW-0732">Signal</keyword>
<keyword id="KW-0812">Transmembrane</keyword>
<keyword id="KW-1133">Transmembrane helix</keyword>
<feature type="signal peptide" evidence="2">
    <location>
        <begin position="1"/>
        <end position="19"/>
    </location>
</feature>
<feature type="chain" id="PRO_0000371369" description="Frizzled and smoothened-like protein G">
    <location>
        <begin position="20"/>
        <end position="574"/>
    </location>
</feature>
<feature type="topological domain" description="Extracellular" evidence="2">
    <location>
        <begin position="20"/>
        <end position="246"/>
    </location>
</feature>
<feature type="transmembrane region" description="Helical; Name=1" evidence="2">
    <location>
        <begin position="247"/>
        <end position="267"/>
    </location>
</feature>
<feature type="topological domain" description="Cytoplasmic" evidence="2">
    <location>
        <begin position="268"/>
        <end position="273"/>
    </location>
</feature>
<feature type="transmembrane region" description="Helical; Name=2" evidence="2">
    <location>
        <begin position="274"/>
        <end position="294"/>
    </location>
</feature>
<feature type="topological domain" description="Extracellular" evidence="2">
    <location>
        <begin position="295"/>
        <end position="324"/>
    </location>
</feature>
<feature type="transmembrane region" description="Helical; Name=3" evidence="2">
    <location>
        <begin position="325"/>
        <end position="345"/>
    </location>
</feature>
<feature type="topological domain" description="Cytoplasmic" evidence="2">
    <location>
        <begin position="346"/>
        <end position="358"/>
    </location>
</feature>
<feature type="transmembrane region" description="Helical; Name=4" evidence="2">
    <location>
        <begin position="359"/>
        <end position="379"/>
    </location>
</feature>
<feature type="topological domain" description="Extracellular" evidence="2">
    <location>
        <begin position="380"/>
        <end position="401"/>
    </location>
</feature>
<feature type="transmembrane region" description="Helical; Name=5" evidence="2">
    <location>
        <begin position="402"/>
        <end position="422"/>
    </location>
</feature>
<feature type="topological domain" description="Cytoplasmic" evidence="2">
    <location>
        <begin position="423"/>
        <end position="445"/>
    </location>
</feature>
<feature type="transmembrane region" description="Helical; Name=6" evidence="2">
    <location>
        <begin position="446"/>
        <end position="466"/>
    </location>
</feature>
<feature type="topological domain" description="Extracellular" evidence="2">
    <location>
        <begin position="467"/>
        <end position="502"/>
    </location>
</feature>
<feature type="transmembrane region" description="Helical; Name=7" evidence="2">
    <location>
        <begin position="503"/>
        <end position="523"/>
    </location>
</feature>
<feature type="topological domain" description="Cytoplasmic" evidence="2">
    <location>
        <begin position="524"/>
        <end position="574"/>
    </location>
</feature>
<feature type="domain" description="FZ">
    <location>
        <begin position="30"/>
        <end position="181"/>
    </location>
</feature>
<feature type="region of interest" description="Disordered" evidence="3">
    <location>
        <begin position="550"/>
        <end position="574"/>
    </location>
</feature>
<feature type="compositionally biased region" description="Low complexity" evidence="3">
    <location>
        <begin position="550"/>
        <end position="568"/>
    </location>
</feature>
<feature type="glycosylation site" description="N-linked (GlcNAc...) asparagine" evidence="2">
    <location>
        <position position="119"/>
    </location>
</feature>
<feature type="glycosylation site" description="N-linked (GlcNAc...) asparagine" evidence="2">
    <location>
        <position position="161"/>
    </location>
</feature>
<feature type="glycosylation site" description="N-linked (GlcNAc...) asparagine" evidence="2">
    <location>
        <position position="187"/>
    </location>
</feature>
<feature type="glycosylation site" description="N-linked (GlcNAc...) asparagine" evidence="2">
    <location>
        <position position="206"/>
    </location>
</feature>
<feature type="glycosylation site" description="N-linked (GlcNAc...) asparagine" evidence="2">
    <location>
        <position position="233"/>
    </location>
</feature>
<feature type="glycosylation site" description="N-linked (GlcNAc...) asparagine" evidence="2">
    <location>
        <position position="244"/>
    </location>
</feature>
<feature type="glycosylation site" description="N-linked (GlcNAc...) asparagine" evidence="2">
    <location>
        <position position="486"/>
    </location>
</feature>
<feature type="disulfide bond" evidence="1">
    <location>
        <begin position="35"/>
        <end position="109"/>
    </location>
</feature>
<feature type="disulfide bond" evidence="1">
    <location>
        <begin position="48"/>
        <end position="102"/>
    </location>
</feature>
<feature type="disulfide bond" evidence="1">
    <location>
        <begin position="91"/>
        <end position="138"/>
    </location>
</feature>
<feature type="disulfide bond" evidence="1">
    <location>
        <begin position="127"/>
        <end position="178"/>
    </location>
</feature>
<protein>
    <recommendedName>
        <fullName>Frizzled and smoothened-like protein G</fullName>
    </recommendedName>
</protein>
<dbReference type="EMBL" id="AAFI02000109">
    <property type="protein sequence ID" value="EAL63312.1"/>
    <property type="molecule type" value="Genomic_DNA"/>
</dbReference>
<dbReference type="RefSeq" id="XP_636816.1">
    <property type="nucleotide sequence ID" value="XM_631724.1"/>
</dbReference>
<dbReference type="FunCoup" id="Q54J71">
    <property type="interactions" value="20"/>
</dbReference>
<dbReference type="GlyCosmos" id="Q54J71">
    <property type="glycosylation" value="7 sites, No reported glycans"/>
</dbReference>
<dbReference type="GlyGen" id="Q54J71">
    <property type="glycosylation" value="7 sites"/>
</dbReference>
<dbReference type="PaxDb" id="44689-DDB0231316"/>
<dbReference type="EnsemblProtists" id="EAL63312">
    <property type="protein sequence ID" value="EAL63312"/>
    <property type="gene ID" value="DDB_G0288261"/>
</dbReference>
<dbReference type="GeneID" id="8626533"/>
<dbReference type="KEGG" id="ddi:DDB_G0288261"/>
<dbReference type="dictyBase" id="DDB_G0288261">
    <property type="gene designation" value="fslG"/>
</dbReference>
<dbReference type="VEuPathDB" id="AmoebaDB:DDB_G0288261"/>
<dbReference type="eggNOG" id="ENOG502T166">
    <property type="taxonomic scope" value="Eukaryota"/>
</dbReference>
<dbReference type="HOGENOM" id="CLU_030318_0_0_1"/>
<dbReference type="InParanoid" id="Q54J71"/>
<dbReference type="OMA" id="QLNCAQP"/>
<dbReference type="PhylomeDB" id="Q54J71"/>
<dbReference type="PRO" id="PR:Q54J71"/>
<dbReference type="Proteomes" id="UP000002195">
    <property type="component" value="Chromosome 5"/>
</dbReference>
<dbReference type="GO" id="GO:0016020">
    <property type="term" value="C:membrane"/>
    <property type="evidence" value="ECO:0007669"/>
    <property type="project" value="UniProtKB-SubCell"/>
</dbReference>
<dbReference type="GO" id="GO:0004930">
    <property type="term" value="F:G protein-coupled receptor activity"/>
    <property type="evidence" value="ECO:0007669"/>
    <property type="project" value="InterPro"/>
</dbReference>
<dbReference type="GO" id="GO:0007166">
    <property type="term" value="P:cell surface receptor signaling pathway"/>
    <property type="evidence" value="ECO:0007669"/>
    <property type="project" value="InterPro"/>
</dbReference>
<dbReference type="CDD" id="cd07066">
    <property type="entry name" value="CRD_FZ"/>
    <property type="match status" value="1"/>
</dbReference>
<dbReference type="Gene3D" id="1.20.1070.10">
    <property type="entry name" value="Rhodopsin 7-helix transmembrane proteins"/>
    <property type="match status" value="1"/>
</dbReference>
<dbReference type="InterPro" id="IPR017981">
    <property type="entry name" value="GPCR_2-like_7TM"/>
</dbReference>
<dbReference type="InterPro" id="IPR000832">
    <property type="entry name" value="GPCR_2_secretin-like"/>
</dbReference>
<dbReference type="InterPro" id="IPR050949">
    <property type="entry name" value="GPCR_Fz/Smo-like"/>
</dbReference>
<dbReference type="PANTHER" id="PTHR31787:SF1">
    <property type="entry name" value="FRIZZLED AND SMOOTHENED-LIKE PROTEIN B-RELATED"/>
    <property type="match status" value="1"/>
</dbReference>
<dbReference type="PANTHER" id="PTHR31787">
    <property type="entry name" value="G-PROTEIN-COUPLED RECEPTOR GPCR FAMILY PROTEIN"/>
    <property type="match status" value="1"/>
</dbReference>
<dbReference type="Pfam" id="PF00002">
    <property type="entry name" value="7tm_2"/>
    <property type="match status" value="1"/>
</dbReference>
<dbReference type="SUPFAM" id="SSF81321">
    <property type="entry name" value="Family A G protein-coupled receptor-like"/>
    <property type="match status" value="1"/>
</dbReference>
<dbReference type="PROSITE" id="PS50261">
    <property type="entry name" value="G_PROTEIN_RECEP_F2_4"/>
    <property type="match status" value="1"/>
</dbReference>
<proteinExistence type="inferred from homology"/>